<proteinExistence type="inferred from homology"/>
<accession>B1LY47</accession>
<name>RL1_METRJ</name>
<keyword id="KW-0678">Repressor</keyword>
<keyword id="KW-0687">Ribonucleoprotein</keyword>
<keyword id="KW-0689">Ribosomal protein</keyword>
<keyword id="KW-0694">RNA-binding</keyword>
<keyword id="KW-0699">rRNA-binding</keyword>
<keyword id="KW-0810">Translation regulation</keyword>
<keyword id="KW-0820">tRNA-binding</keyword>
<protein>
    <recommendedName>
        <fullName evidence="1">Large ribosomal subunit protein uL1</fullName>
    </recommendedName>
    <alternativeName>
        <fullName evidence="2">50S ribosomal protein L1</fullName>
    </alternativeName>
</protein>
<organism>
    <name type="scientific">Methylobacterium radiotolerans (strain ATCC 27329 / DSM 1819 / JCM 2831 / NBRC 15690 / NCIMB 10815 / 0-1)</name>
    <dbReference type="NCBI Taxonomy" id="426355"/>
    <lineage>
        <taxon>Bacteria</taxon>
        <taxon>Pseudomonadati</taxon>
        <taxon>Pseudomonadota</taxon>
        <taxon>Alphaproteobacteria</taxon>
        <taxon>Hyphomicrobiales</taxon>
        <taxon>Methylobacteriaceae</taxon>
        <taxon>Methylobacterium</taxon>
    </lineage>
</organism>
<feature type="chain" id="PRO_1000141429" description="Large ribosomal subunit protein uL1">
    <location>
        <begin position="1"/>
        <end position="232"/>
    </location>
</feature>
<evidence type="ECO:0000255" key="1">
    <source>
        <dbReference type="HAMAP-Rule" id="MF_01318"/>
    </source>
</evidence>
<evidence type="ECO:0000305" key="2"/>
<gene>
    <name evidence="1" type="primary">rplA</name>
    <name type="ordered locus">Mrad2831_3843</name>
</gene>
<dbReference type="EMBL" id="CP001001">
    <property type="protein sequence ID" value="ACB25818.1"/>
    <property type="molecule type" value="Genomic_DNA"/>
</dbReference>
<dbReference type="RefSeq" id="WP_012320776.1">
    <property type="nucleotide sequence ID" value="NC_010505.1"/>
</dbReference>
<dbReference type="SMR" id="B1LY47"/>
<dbReference type="STRING" id="426355.Mrad2831_3843"/>
<dbReference type="GeneID" id="6139897"/>
<dbReference type="KEGG" id="mrd:Mrad2831_3843"/>
<dbReference type="eggNOG" id="COG0081">
    <property type="taxonomic scope" value="Bacteria"/>
</dbReference>
<dbReference type="HOGENOM" id="CLU_062853_0_0_5"/>
<dbReference type="OrthoDB" id="9803740at2"/>
<dbReference type="Proteomes" id="UP000006589">
    <property type="component" value="Chromosome"/>
</dbReference>
<dbReference type="GO" id="GO:0022625">
    <property type="term" value="C:cytosolic large ribosomal subunit"/>
    <property type="evidence" value="ECO:0007669"/>
    <property type="project" value="TreeGrafter"/>
</dbReference>
<dbReference type="GO" id="GO:0019843">
    <property type="term" value="F:rRNA binding"/>
    <property type="evidence" value="ECO:0007669"/>
    <property type="project" value="UniProtKB-UniRule"/>
</dbReference>
<dbReference type="GO" id="GO:0003735">
    <property type="term" value="F:structural constituent of ribosome"/>
    <property type="evidence" value="ECO:0007669"/>
    <property type="project" value="InterPro"/>
</dbReference>
<dbReference type="GO" id="GO:0000049">
    <property type="term" value="F:tRNA binding"/>
    <property type="evidence" value="ECO:0007669"/>
    <property type="project" value="UniProtKB-KW"/>
</dbReference>
<dbReference type="GO" id="GO:0006417">
    <property type="term" value="P:regulation of translation"/>
    <property type="evidence" value="ECO:0007669"/>
    <property type="project" value="UniProtKB-KW"/>
</dbReference>
<dbReference type="GO" id="GO:0006412">
    <property type="term" value="P:translation"/>
    <property type="evidence" value="ECO:0007669"/>
    <property type="project" value="UniProtKB-UniRule"/>
</dbReference>
<dbReference type="CDD" id="cd00403">
    <property type="entry name" value="Ribosomal_L1"/>
    <property type="match status" value="1"/>
</dbReference>
<dbReference type="FunFam" id="3.40.50.790:FF:000001">
    <property type="entry name" value="50S ribosomal protein L1"/>
    <property type="match status" value="1"/>
</dbReference>
<dbReference type="Gene3D" id="3.30.190.20">
    <property type="match status" value="1"/>
</dbReference>
<dbReference type="Gene3D" id="3.40.50.790">
    <property type="match status" value="1"/>
</dbReference>
<dbReference type="HAMAP" id="MF_01318_B">
    <property type="entry name" value="Ribosomal_uL1_B"/>
    <property type="match status" value="1"/>
</dbReference>
<dbReference type="InterPro" id="IPR005878">
    <property type="entry name" value="Ribosom_uL1_bac-type"/>
</dbReference>
<dbReference type="InterPro" id="IPR002143">
    <property type="entry name" value="Ribosomal_uL1"/>
</dbReference>
<dbReference type="InterPro" id="IPR023674">
    <property type="entry name" value="Ribosomal_uL1-like"/>
</dbReference>
<dbReference type="InterPro" id="IPR028364">
    <property type="entry name" value="Ribosomal_uL1/biogenesis"/>
</dbReference>
<dbReference type="InterPro" id="IPR016095">
    <property type="entry name" value="Ribosomal_uL1_3-a/b-sand"/>
</dbReference>
<dbReference type="InterPro" id="IPR023673">
    <property type="entry name" value="Ribosomal_uL1_CS"/>
</dbReference>
<dbReference type="NCBIfam" id="TIGR01169">
    <property type="entry name" value="rplA_bact"/>
    <property type="match status" value="1"/>
</dbReference>
<dbReference type="PANTHER" id="PTHR36427">
    <property type="entry name" value="54S RIBOSOMAL PROTEIN L1, MITOCHONDRIAL"/>
    <property type="match status" value="1"/>
</dbReference>
<dbReference type="PANTHER" id="PTHR36427:SF3">
    <property type="entry name" value="LARGE RIBOSOMAL SUBUNIT PROTEIN UL1M"/>
    <property type="match status" value="1"/>
</dbReference>
<dbReference type="Pfam" id="PF00687">
    <property type="entry name" value="Ribosomal_L1"/>
    <property type="match status" value="1"/>
</dbReference>
<dbReference type="PIRSF" id="PIRSF002155">
    <property type="entry name" value="Ribosomal_L1"/>
    <property type="match status" value="1"/>
</dbReference>
<dbReference type="SUPFAM" id="SSF56808">
    <property type="entry name" value="Ribosomal protein L1"/>
    <property type="match status" value="1"/>
</dbReference>
<dbReference type="PROSITE" id="PS01199">
    <property type="entry name" value="RIBOSOMAL_L1"/>
    <property type="match status" value="1"/>
</dbReference>
<reference key="1">
    <citation type="submission" date="2008-03" db="EMBL/GenBank/DDBJ databases">
        <title>Complete sequence of chromosome of Methylobacterium radiotolerans JCM 2831.</title>
        <authorList>
            <consortium name="US DOE Joint Genome Institute"/>
            <person name="Copeland A."/>
            <person name="Lucas S."/>
            <person name="Lapidus A."/>
            <person name="Glavina del Rio T."/>
            <person name="Dalin E."/>
            <person name="Tice H."/>
            <person name="Bruce D."/>
            <person name="Goodwin L."/>
            <person name="Pitluck S."/>
            <person name="Kiss H."/>
            <person name="Brettin T."/>
            <person name="Detter J.C."/>
            <person name="Han C."/>
            <person name="Kuske C.R."/>
            <person name="Schmutz J."/>
            <person name="Larimer F."/>
            <person name="Land M."/>
            <person name="Hauser L."/>
            <person name="Kyrpides N."/>
            <person name="Mikhailova N."/>
            <person name="Marx C.J."/>
            <person name="Richardson P."/>
        </authorList>
    </citation>
    <scope>NUCLEOTIDE SEQUENCE [LARGE SCALE GENOMIC DNA]</scope>
    <source>
        <strain>ATCC 27329 / DSM 1819 / JCM 2831 / NBRC 15690 / NCIMB 10815 / 0-1</strain>
    </source>
</reference>
<comment type="function">
    <text evidence="1">Binds directly to 23S rRNA. The L1 stalk is quite mobile in the ribosome, and is involved in E site tRNA release.</text>
</comment>
<comment type="function">
    <text evidence="1">Protein L1 is also a translational repressor protein, it controls the translation of the L11 operon by binding to its mRNA.</text>
</comment>
<comment type="subunit">
    <text evidence="1">Part of the 50S ribosomal subunit.</text>
</comment>
<comment type="similarity">
    <text evidence="1">Belongs to the universal ribosomal protein uL1 family.</text>
</comment>
<sequence length="232" mass="24206">MAKEGKRIRAAREGIEATKLYALDEAIKLVKERATAKFDETVEVSMNLGVDPRHADQMVRGVCNLPNGSGRTVRVAVFARGAKADDARAAGADIVGAEDLLEIVQGGKIEFDRCIATPDMMPLVGRLGKVLGPRGLMPNPKVGTVTMDVKGAVAGAKGGSVEFRVEKAGIVHAGVGKVSFDADKLVENIKAFADAVAKAKPAGAKGTYVQRIAVTSTMGPGVKVEPNTVLTA</sequence>